<gene>
    <name type="ORF">GA22148</name>
</gene>
<accession>Q8I1C8</accession>
<accession>Q29DU9</accession>
<organism>
    <name type="scientific">Drosophila pseudoobscura pseudoobscura</name>
    <name type="common">Fruit fly</name>
    <dbReference type="NCBI Taxonomy" id="46245"/>
    <lineage>
        <taxon>Eukaryota</taxon>
        <taxon>Metazoa</taxon>
        <taxon>Ecdysozoa</taxon>
        <taxon>Arthropoda</taxon>
        <taxon>Hexapoda</taxon>
        <taxon>Insecta</taxon>
        <taxon>Pterygota</taxon>
        <taxon>Neoptera</taxon>
        <taxon>Endopterygota</taxon>
        <taxon>Diptera</taxon>
        <taxon>Brachycera</taxon>
        <taxon>Muscomorpha</taxon>
        <taxon>Ephydroidea</taxon>
        <taxon>Drosophilidae</taxon>
        <taxon>Drosophila</taxon>
        <taxon>Sophophora</taxon>
    </lineage>
</organism>
<evidence type="ECO:0000255" key="1"/>
<evidence type="ECO:0000305" key="2"/>
<sequence>MDEVDKIIMHQLHQVDAGIEPTDELASFTPELVVRAVSSCLTEIRPELEVPRSLPGGAMAQRFSVATGLAERCKESGYHGDIGYQTFLYPNPIELRRLLMFLIEQLPRERQATDDLTGKSHPLSGREMLQRQIRKKLTAQLKAMWVPQFCRAVGNRKSHGCSSLCIDFRPKLNLNVPSANLEERTKEVQQYFDQQAPNLFQQTASSSYDLIASVLHKNDLERWGQGLTDSGMFLLASEDPVIPMVLATEKPSATAAEMTPLEELTDEVQKLRTQCETLLGERKAYTARIGALKQRESEATKELADIQPLLKLHERTCLVLADPEQNVTKLEALLQATEAKRRTLTQQWQDYRLPLLETLETLKTAKEAQHVQSIRSGIEQLEQELKEKTQQHNDLNTALRTATQSLAPRKEYTRRIHEFIGNIRKQRADIFKVLDDTRQLQKQLNVVGAQLQRQFNYTDDLLFQSAKHDLHAKKAYKLLAQLHANCSELVECVALTGNVTKQIRELEVQIDGEKLKNVLTSLQQITGDIQKFEQSIQELQSQISTMENGVAKA</sequence>
<reference key="1">
    <citation type="journal article" date="2005" name="Genome Res.">
        <title>Comparative genome sequencing of Drosophila pseudoobscura: chromosomal, gene, and cis-element evolution.</title>
        <authorList>
            <person name="Richards S."/>
            <person name="Liu Y."/>
            <person name="Bettencourt B.R."/>
            <person name="Hradecky P."/>
            <person name="Letovsky S."/>
            <person name="Nielsen R."/>
            <person name="Thornton K."/>
            <person name="Hubisz M.J."/>
            <person name="Chen R."/>
            <person name="Meisel R.P."/>
            <person name="Couronne O."/>
            <person name="Hua S."/>
            <person name="Smith M.A."/>
            <person name="Zhang P."/>
            <person name="Liu J."/>
            <person name="Bussemaker H.J."/>
            <person name="van Batenburg M.F."/>
            <person name="Howells S.L."/>
            <person name="Scherer S.E."/>
            <person name="Sodergren E."/>
            <person name="Matthews B.B."/>
            <person name="Crosby M.A."/>
            <person name="Schroeder A.J."/>
            <person name="Ortiz-Barrientos D."/>
            <person name="Rives C.M."/>
            <person name="Metzker M.L."/>
            <person name="Muzny D.M."/>
            <person name="Scott G."/>
            <person name="Steffen D."/>
            <person name="Wheeler D.A."/>
            <person name="Worley K.C."/>
            <person name="Havlak P."/>
            <person name="Durbin K.J."/>
            <person name="Egan A."/>
            <person name="Gill R."/>
            <person name="Hume J."/>
            <person name="Morgan M.B."/>
            <person name="Miner G."/>
            <person name="Hamilton C."/>
            <person name="Huang Y."/>
            <person name="Waldron L."/>
            <person name="Verduzco D."/>
            <person name="Clerc-Blankenburg K.P."/>
            <person name="Dubchak I."/>
            <person name="Noor M.A.F."/>
            <person name="Anderson W."/>
            <person name="White K.P."/>
            <person name="Clark A.G."/>
            <person name="Schaeffer S.W."/>
            <person name="Gelbart W.M."/>
            <person name="Weinstock G.M."/>
            <person name="Gibbs R.A."/>
        </authorList>
    </citation>
    <scope>NUCLEOTIDE SEQUENCE [LARGE SCALE GENOMIC DNA]</scope>
    <source>
        <strain>MV2-25 / Tucson 14011-0121.94</strain>
    </source>
</reference>
<dbReference type="EMBL" id="AY190946">
    <property type="protein sequence ID" value="AAO01043.1"/>
    <property type="molecule type" value="Genomic_DNA"/>
</dbReference>
<dbReference type="EMBL" id="CH379070">
    <property type="protein sequence ID" value="EAL30315.2"/>
    <property type="molecule type" value="Genomic_DNA"/>
</dbReference>
<dbReference type="SMR" id="Q8I1C8"/>
<dbReference type="FunCoup" id="Q8I1C8">
    <property type="interactions" value="1592"/>
</dbReference>
<dbReference type="STRING" id="46245.Q8I1C8"/>
<dbReference type="EnsemblMetazoa" id="FBtr0288496">
    <property type="protein sequence ID" value="FBpp0286934"/>
    <property type="gene ID" value="FBgn0064421"/>
</dbReference>
<dbReference type="KEGG" id="dpo:4812189"/>
<dbReference type="eggNOG" id="KOG1937">
    <property type="taxonomic scope" value="Eukaryota"/>
</dbReference>
<dbReference type="HOGENOM" id="CLU_024231_1_0_1"/>
<dbReference type="InParanoid" id="Q8I1C8"/>
<dbReference type="OMA" id="KFEQHIQ"/>
<dbReference type="Proteomes" id="UP000001819">
    <property type="component" value="Chromosome X"/>
</dbReference>
<dbReference type="Bgee" id="FBgn0064421">
    <property type="expression patterns" value="Expressed in female reproductive system and 2 other cell types or tissues"/>
</dbReference>
<dbReference type="GO" id="GO:0097602">
    <property type="term" value="F:cullin family protein binding"/>
    <property type="evidence" value="ECO:0007669"/>
    <property type="project" value="TreeGrafter"/>
</dbReference>
<dbReference type="GO" id="GO:2000060">
    <property type="term" value="P:positive regulation of ubiquitin-dependent protein catabolic process"/>
    <property type="evidence" value="ECO:0007669"/>
    <property type="project" value="TreeGrafter"/>
</dbReference>
<dbReference type="InterPro" id="IPR008530">
    <property type="entry name" value="CCDC22"/>
</dbReference>
<dbReference type="InterPro" id="IPR048348">
    <property type="entry name" value="CCDC22_CC"/>
</dbReference>
<dbReference type="InterPro" id="IPR048349">
    <property type="entry name" value="CCDC22_N"/>
</dbReference>
<dbReference type="PANTHER" id="PTHR15668:SF4">
    <property type="entry name" value="COILED-COIL DOMAIN-CONTAINING PROTEIN 22"/>
    <property type="match status" value="1"/>
</dbReference>
<dbReference type="PANTHER" id="PTHR15668">
    <property type="entry name" value="JM1 PROTEIN"/>
    <property type="match status" value="1"/>
</dbReference>
<dbReference type="Pfam" id="PF05667">
    <property type="entry name" value="CCDC22_CC"/>
    <property type="match status" value="1"/>
</dbReference>
<dbReference type="Pfam" id="PF21674">
    <property type="entry name" value="CCDC22_N"/>
    <property type="match status" value="1"/>
</dbReference>
<comment type="similarity">
    <text evidence="2">Belongs to the CCDC22 family.</text>
</comment>
<feature type="chain" id="PRO_0000338407" description="Coiled-coil domain-containing protein 22 homolog">
    <location>
        <begin position="1"/>
        <end position="553"/>
    </location>
</feature>
<feature type="coiled-coil region" evidence="1">
    <location>
        <begin position="261"/>
        <end position="404"/>
    </location>
</feature>
<feature type="coiled-coil region" evidence="1">
    <location>
        <begin position="498"/>
        <end position="553"/>
    </location>
</feature>
<protein>
    <recommendedName>
        <fullName>Coiled-coil domain-containing protein 22 homolog</fullName>
    </recommendedName>
</protein>
<keyword id="KW-0175">Coiled coil</keyword>
<keyword id="KW-1185">Reference proteome</keyword>
<name>CCD22_DROPS</name>
<proteinExistence type="inferred from homology"/>